<reference key="1">
    <citation type="journal article" date="2002" name="Proc. Natl. Acad. Sci. U.S.A.">
        <title>The complete genome of hyperthermophile Methanopyrus kandleri AV19 and monophyly of archaeal methanogens.</title>
        <authorList>
            <person name="Slesarev A.I."/>
            <person name="Mezhevaya K.V."/>
            <person name="Makarova K.S."/>
            <person name="Polushin N.N."/>
            <person name="Shcherbinina O.V."/>
            <person name="Shakhova V.V."/>
            <person name="Belova G.I."/>
            <person name="Aravind L."/>
            <person name="Natale D.A."/>
            <person name="Rogozin I.B."/>
            <person name="Tatusov R.L."/>
            <person name="Wolf Y.I."/>
            <person name="Stetter K.O."/>
            <person name="Malykh A.G."/>
            <person name="Koonin E.V."/>
            <person name="Kozyavkin S.A."/>
        </authorList>
    </citation>
    <scope>NUCLEOTIDE SEQUENCE [LARGE SCALE GENOMIC DNA]</scope>
    <source>
        <strain>AV19 / DSM 6324 / JCM 9639 / NBRC 100938</strain>
    </source>
</reference>
<proteinExistence type="evidence at protein level"/>
<accession>Q8TWG5</accession>
<dbReference type="EC" id="1.1.1.299" evidence="3"/>
<dbReference type="EMBL" id="AE009439">
    <property type="protein sequence ID" value="AAM02282.1"/>
    <property type="molecule type" value="Genomic_DNA"/>
</dbReference>
<dbReference type="RefSeq" id="WP_011019437.1">
    <property type="nucleotide sequence ID" value="NC_003551.1"/>
</dbReference>
<dbReference type="PDB" id="8RS5">
    <property type="method" value="X-ray"/>
    <property type="resolution" value="1.95 A"/>
    <property type="chains" value="A/B=1-317"/>
</dbReference>
<dbReference type="PDB" id="8RWL">
    <property type="method" value="X-ray"/>
    <property type="resolution" value="2.30 A"/>
    <property type="chains" value="A/B=1-317"/>
</dbReference>
<dbReference type="PDB" id="9END">
    <property type="method" value="X-ray"/>
    <property type="resolution" value="1.95 A"/>
    <property type="chains" value="A/B=1-317"/>
</dbReference>
<dbReference type="PDBsum" id="8RS5"/>
<dbReference type="PDBsum" id="8RWL"/>
<dbReference type="PDBsum" id="9END"/>
<dbReference type="SMR" id="Q8TWG5"/>
<dbReference type="FunCoup" id="Q8TWG5">
    <property type="interactions" value="104"/>
</dbReference>
<dbReference type="STRING" id="190192.MK1069"/>
<dbReference type="PaxDb" id="190192-MK1069"/>
<dbReference type="EnsemblBacteria" id="AAM02282">
    <property type="protein sequence ID" value="AAM02282"/>
    <property type="gene ID" value="MK1069"/>
</dbReference>
<dbReference type="GeneID" id="1477170"/>
<dbReference type="KEGG" id="mka:MK1069"/>
<dbReference type="PATRIC" id="fig|190192.8.peg.1123"/>
<dbReference type="HOGENOM" id="CLU_045401_1_1_2"/>
<dbReference type="InParanoid" id="Q8TWG5"/>
<dbReference type="OrthoDB" id="2596at2157"/>
<dbReference type="Proteomes" id="UP000001826">
    <property type="component" value="Chromosome"/>
</dbReference>
<dbReference type="GO" id="GO:0004459">
    <property type="term" value="F:L-lactate dehydrogenase activity"/>
    <property type="evidence" value="ECO:0007669"/>
    <property type="project" value="InterPro"/>
</dbReference>
<dbReference type="GO" id="GO:0030060">
    <property type="term" value="F:L-malate dehydrogenase (NAD+) activity"/>
    <property type="evidence" value="ECO:0007669"/>
    <property type="project" value="RHEA"/>
</dbReference>
<dbReference type="GO" id="GO:0046554">
    <property type="term" value="F:L-malate dehydrogenase (NADP+) activity"/>
    <property type="evidence" value="ECO:0007669"/>
    <property type="project" value="RHEA"/>
</dbReference>
<dbReference type="GO" id="GO:0006089">
    <property type="term" value="P:lactate metabolic process"/>
    <property type="evidence" value="ECO:0007669"/>
    <property type="project" value="TreeGrafter"/>
</dbReference>
<dbReference type="GO" id="GO:0006099">
    <property type="term" value="P:tricarboxylic acid cycle"/>
    <property type="evidence" value="ECO:0007669"/>
    <property type="project" value="UniProtKB-KW"/>
</dbReference>
<dbReference type="CDD" id="cd05294">
    <property type="entry name" value="LDH-like_MDH_nadp"/>
    <property type="match status" value="1"/>
</dbReference>
<dbReference type="Gene3D" id="3.90.110.10">
    <property type="entry name" value="Lactate dehydrogenase/glycoside hydrolase, family 4, C-terminal"/>
    <property type="match status" value="1"/>
</dbReference>
<dbReference type="Gene3D" id="3.40.50.720">
    <property type="entry name" value="NAD(P)-binding Rossmann-like Domain"/>
    <property type="match status" value="1"/>
</dbReference>
<dbReference type="InterPro" id="IPR001557">
    <property type="entry name" value="L-lactate/malate_DH"/>
</dbReference>
<dbReference type="InterPro" id="IPR018177">
    <property type="entry name" value="L-lactate_DH_AS"/>
</dbReference>
<dbReference type="InterPro" id="IPR022383">
    <property type="entry name" value="Lactate/malate_DH_C"/>
</dbReference>
<dbReference type="InterPro" id="IPR001236">
    <property type="entry name" value="Lactate/malate_DH_N"/>
</dbReference>
<dbReference type="InterPro" id="IPR015955">
    <property type="entry name" value="Lactate_DH/Glyco_Ohase_4_C"/>
</dbReference>
<dbReference type="InterPro" id="IPR036291">
    <property type="entry name" value="NAD(P)-bd_dom_sf"/>
</dbReference>
<dbReference type="NCBIfam" id="NF004863">
    <property type="entry name" value="PRK06223.1"/>
    <property type="match status" value="1"/>
</dbReference>
<dbReference type="PANTHER" id="PTHR43128">
    <property type="entry name" value="L-2-HYDROXYCARBOXYLATE DEHYDROGENASE (NAD(P)(+))"/>
    <property type="match status" value="1"/>
</dbReference>
<dbReference type="PANTHER" id="PTHR43128:SF16">
    <property type="entry name" value="L-LACTATE DEHYDROGENASE"/>
    <property type="match status" value="1"/>
</dbReference>
<dbReference type="Pfam" id="PF02866">
    <property type="entry name" value="Ldh_1_C"/>
    <property type="match status" value="1"/>
</dbReference>
<dbReference type="Pfam" id="PF00056">
    <property type="entry name" value="Ldh_1_N"/>
    <property type="match status" value="1"/>
</dbReference>
<dbReference type="PIRSF" id="PIRSF000102">
    <property type="entry name" value="Lac_mal_DH"/>
    <property type="match status" value="1"/>
</dbReference>
<dbReference type="PRINTS" id="PR00086">
    <property type="entry name" value="LLDHDRGNASE"/>
</dbReference>
<dbReference type="SUPFAM" id="SSF56327">
    <property type="entry name" value="LDH C-terminal domain-like"/>
    <property type="match status" value="1"/>
</dbReference>
<dbReference type="SUPFAM" id="SSF51735">
    <property type="entry name" value="NAD(P)-binding Rossmann-fold domains"/>
    <property type="match status" value="1"/>
</dbReference>
<name>MDH_METKA</name>
<keyword id="KW-0002">3D-structure</keyword>
<keyword id="KW-0520">NAD</keyword>
<keyword id="KW-0521">NADP</keyword>
<keyword id="KW-0560">Oxidoreductase</keyword>
<keyword id="KW-1185">Reference proteome</keyword>
<keyword id="KW-0816">Tricarboxylic acid cycle</keyword>
<gene>
    <name type="primary">mdh</name>
    <name type="ordered locus">MK1069</name>
</gene>
<comment type="function">
    <text evidence="3">Catalyzes the reversible oxidation of malate to oxaloacetate.</text>
</comment>
<comment type="catalytic activity">
    <reaction evidence="3">
        <text>(S)-malate + NADP(+) = oxaloacetate + NADPH + H(+)</text>
        <dbReference type="Rhea" id="RHEA:10824"/>
        <dbReference type="ChEBI" id="CHEBI:15378"/>
        <dbReference type="ChEBI" id="CHEBI:15589"/>
        <dbReference type="ChEBI" id="CHEBI:16452"/>
        <dbReference type="ChEBI" id="CHEBI:57783"/>
        <dbReference type="ChEBI" id="CHEBI:58349"/>
        <dbReference type="EC" id="1.1.1.299"/>
    </reaction>
</comment>
<comment type="catalytic activity">
    <reaction evidence="3">
        <text>(S)-malate + NAD(+) = oxaloacetate + NADH + H(+)</text>
        <dbReference type="Rhea" id="RHEA:21432"/>
        <dbReference type="ChEBI" id="CHEBI:15378"/>
        <dbReference type="ChEBI" id="CHEBI:15589"/>
        <dbReference type="ChEBI" id="CHEBI:16452"/>
        <dbReference type="ChEBI" id="CHEBI:57540"/>
        <dbReference type="ChEBI" id="CHEBI:57945"/>
        <dbReference type="EC" id="1.1.1.299"/>
    </reaction>
</comment>
<comment type="similarity">
    <text evidence="4">Belongs to the LDH/MDH superfamily.</text>
</comment>
<evidence type="ECO:0000250" key="1">
    <source>
        <dbReference type="UniProtKB" id="P61889"/>
    </source>
</evidence>
<evidence type="ECO:0000250" key="2">
    <source>
        <dbReference type="UniProtKB" id="Q60176"/>
    </source>
</evidence>
<evidence type="ECO:0000250" key="3">
    <source>
        <dbReference type="UniProtKB" id="Q9YEA1"/>
    </source>
</evidence>
<evidence type="ECO:0000305" key="4"/>
<evidence type="ECO:0007829" key="5">
    <source>
        <dbReference type="PDB" id="8RS5"/>
    </source>
</evidence>
<organism>
    <name type="scientific">Methanopyrus kandleri (strain AV19 / DSM 6324 / JCM 9639 / NBRC 100938)</name>
    <dbReference type="NCBI Taxonomy" id="190192"/>
    <lineage>
        <taxon>Archaea</taxon>
        <taxon>Methanobacteriati</taxon>
        <taxon>Methanobacteriota</taxon>
        <taxon>Methanomada group</taxon>
        <taxon>Methanopyri</taxon>
        <taxon>Methanopyrales</taxon>
        <taxon>Methanopyraceae</taxon>
        <taxon>Methanopyrus</taxon>
    </lineage>
</organism>
<sequence>MSKVAVIGATGRVGSTAAARLALLDCVNEVTLIARPKSVDKLRGLRRDILDSLAAAQKDAEITIGCERDDYVDADVIVMTAGIPRKPGQTRLDLTKDNAAIIKKYLEGVAEENPEAIVLVVTNPVDVLTYVALKVSGLPKNRVIGLGTHLDSMRFKVLIAKHFNVHMSEVHTRIIGEHGDTMVPVISSTSVGGIPVTRMPGWEDFDVEEAVREVKEAGQRIIETWGGSQFGPAQAITNLVRTILQDERRVLTVSAYLDGEIDGIRDVCIGVPARLGREGVLEIVPIELEEDEMRAFRRSVKVVKEATREAMEAISER</sequence>
<feature type="chain" id="PRO_0000113486" description="Malate dehydrogenase">
    <location>
        <begin position="1"/>
        <end position="317"/>
    </location>
</feature>
<feature type="active site" description="Proton acceptor" evidence="1">
    <location>
        <position position="178"/>
    </location>
</feature>
<feature type="binding site" evidence="2">
    <location>
        <begin position="8"/>
        <end position="14"/>
    </location>
    <ligand>
        <name>NADP(+)</name>
        <dbReference type="ChEBI" id="CHEBI:58349"/>
    </ligand>
</feature>
<feature type="binding site" evidence="1">
    <location>
        <position position="85"/>
    </location>
    <ligand>
        <name>substrate</name>
    </ligand>
</feature>
<feature type="binding site" evidence="1">
    <location>
        <position position="91"/>
    </location>
    <ligand>
        <name>substrate</name>
    </ligand>
</feature>
<feature type="binding site" evidence="2">
    <location>
        <position position="98"/>
    </location>
    <ligand>
        <name>NADP(+)</name>
        <dbReference type="ChEBI" id="CHEBI:58349"/>
    </ligand>
</feature>
<feature type="binding site" evidence="2">
    <location>
        <begin position="121"/>
        <end position="123"/>
    </location>
    <ligand>
        <name>NADP(+)</name>
        <dbReference type="ChEBI" id="CHEBI:58349"/>
    </ligand>
</feature>
<feature type="binding site" evidence="1">
    <location>
        <position position="123"/>
    </location>
    <ligand>
        <name>substrate</name>
    </ligand>
</feature>
<feature type="binding site" evidence="1">
    <location>
        <position position="154"/>
    </location>
    <ligand>
        <name>substrate</name>
    </ligand>
</feature>
<feature type="strand" evidence="5">
    <location>
        <begin position="3"/>
        <end position="7"/>
    </location>
</feature>
<feature type="turn" evidence="5">
    <location>
        <begin position="8"/>
        <end position="10"/>
    </location>
</feature>
<feature type="helix" evidence="5">
    <location>
        <begin position="12"/>
        <end position="22"/>
    </location>
</feature>
<feature type="strand" evidence="5">
    <location>
        <begin position="29"/>
        <end position="33"/>
    </location>
</feature>
<feature type="helix" evidence="5">
    <location>
        <begin position="36"/>
        <end position="38"/>
    </location>
</feature>
<feature type="helix" evidence="5">
    <location>
        <begin position="39"/>
        <end position="56"/>
    </location>
</feature>
<feature type="strand" evidence="5">
    <location>
        <begin position="61"/>
        <end position="67"/>
    </location>
</feature>
<feature type="helix" evidence="5">
    <location>
        <begin position="68"/>
        <end position="71"/>
    </location>
</feature>
<feature type="strand" evidence="5">
    <location>
        <begin position="75"/>
        <end position="79"/>
    </location>
</feature>
<feature type="helix" evidence="5">
    <location>
        <begin position="93"/>
        <end position="106"/>
    </location>
</feature>
<feature type="helix" evidence="5">
    <location>
        <begin position="109"/>
        <end position="112"/>
    </location>
</feature>
<feature type="strand" evidence="5">
    <location>
        <begin position="117"/>
        <end position="120"/>
    </location>
</feature>
<feature type="strand" evidence="5">
    <location>
        <begin position="122"/>
        <end position="124"/>
    </location>
</feature>
<feature type="helix" evidence="5">
    <location>
        <begin position="125"/>
        <end position="136"/>
    </location>
</feature>
<feature type="helix" evidence="5">
    <location>
        <begin position="140"/>
        <end position="142"/>
    </location>
</feature>
<feature type="strand" evidence="5">
    <location>
        <begin position="143"/>
        <end position="145"/>
    </location>
</feature>
<feature type="helix" evidence="5">
    <location>
        <begin position="149"/>
        <end position="163"/>
    </location>
</feature>
<feature type="helix" evidence="5">
    <location>
        <begin position="167"/>
        <end position="169"/>
    </location>
</feature>
<feature type="strand" evidence="5">
    <location>
        <begin position="174"/>
        <end position="176"/>
    </location>
</feature>
<feature type="helix" evidence="5">
    <location>
        <begin position="186"/>
        <end position="188"/>
    </location>
</feature>
<feature type="helix" evidence="5">
    <location>
        <begin position="196"/>
        <end position="198"/>
    </location>
</feature>
<feature type="helix" evidence="5">
    <location>
        <begin position="202"/>
        <end position="204"/>
    </location>
</feature>
<feature type="helix" evidence="5">
    <location>
        <begin position="207"/>
        <end position="224"/>
    </location>
</feature>
<feature type="helix" evidence="5">
    <location>
        <begin position="230"/>
        <end position="244"/>
    </location>
</feature>
<feature type="strand" evidence="5">
    <location>
        <begin position="249"/>
        <end position="259"/>
    </location>
</feature>
<feature type="turn" evidence="5">
    <location>
        <begin position="260"/>
        <end position="263"/>
    </location>
</feature>
<feature type="strand" evidence="5">
    <location>
        <begin position="265"/>
        <end position="276"/>
    </location>
</feature>
<feature type="strand" evidence="5">
    <location>
        <begin position="279"/>
        <end position="283"/>
    </location>
</feature>
<feature type="helix" evidence="5">
    <location>
        <begin position="290"/>
        <end position="313"/>
    </location>
</feature>
<protein>
    <recommendedName>
        <fullName evidence="3">Malate dehydrogenase</fullName>
        <ecNumber evidence="3">1.1.1.299</ecNumber>
    </recommendedName>
</protein>